<organism>
    <name type="scientific">Pteridium aquilinum subsp. aquilinum</name>
    <name type="common">Bracken fern</name>
    <dbReference type="NCBI Taxonomy" id="104588"/>
    <lineage>
        <taxon>Eukaryota</taxon>
        <taxon>Viridiplantae</taxon>
        <taxon>Streptophyta</taxon>
        <taxon>Embryophyta</taxon>
        <taxon>Tracheophyta</taxon>
        <taxon>Polypodiopsida</taxon>
        <taxon>Polypodiidae</taxon>
        <taxon>Polypodiales</taxon>
        <taxon>Dennstaedtiineae</taxon>
        <taxon>Dennstaedtiaceae</taxon>
        <taxon>Pteridium</taxon>
    </lineage>
</organism>
<name>CSPL6_PTEAA</name>
<comment type="subunit">
    <text evidence="1">Homodimer and heterodimers.</text>
</comment>
<comment type="subcellular location">
    <subcellularLocation>
        <location evidence="1">Cell membrane</location>
        <topology evidence="1">Multi-pass membrane protein</topology>
    </subcellularLocation>
</comment>
<comment type="similarity">
    <text evidence="3">Belongs to the Casparian strip membrane proteins (CASP) family.</text>
</comment>
<feature type="chain" id="PRO_0000417799" description="CASP-like protein 5A1">
    <location>
        <begin position="1"/>
        <end position="180"/>
    </location>
</feature>
<feature type="topological domain" description="Cytoplasmic" evidence="2">
    <location>
        <begin position="1"/>
        <end position="36"/>
    </location>
</feature>
<feature type="transmembrane region" description="Helical" evidence="2">
    <location>
        <begin position="37"/>
        <end position="57"/>
    </location>
</feature>
<feature type="topological domain" description="Extracellular" evidence="2">
    <location>
        <begin position="58"/>
        <end position="67"/>
    </location>
</feature>
<feature type="transmembrane region" description="Helical" evidence="2">
    <location>
        <begin position="68"/>
        <end position="88"/>
    </location>
</feature>
<feature type="topological domain" description="Cytoplasmic" evidence="2">
    <location>
        <begin position="89"/>
        <end position="102"/>
    </location>
</feature>
<feature type="transmembrane region" description="Helical" evidence="2">
    <location>
        <begin position="103"/>
        <end position="123"/>
    </location>
</feature>
<feature type="topological domain" description="Extracellular" evidence="2">
    <location>
        <begin position="124"/>
        <end position="150"/>
    </location>
</feature>
<feature type="transmembrane region" description="Helical" evidence="2">
    <location>
        <begin position="151"/>
        <end position="171"/>
    </location>
</feature>
<feature type="topological domain" description="Cytoplasmic" evidence="2">
    <location>
        <begin position="172"/>
        <end position="180"/>
    </location>
</feature>
<evidence type="ECO:0000250" key="1"/>
<evidence type="ECO:0000255" key="2"/>
<evidence type="ECO:0000305" key="3"/>
<protein>
    <recommendedName>
        <fullName>CASP-like protein 5A1</fullName>
        <shortName>PaCASPL5A1</shortName>
    </recommendedName>
</protein>
<dbReference type="GO" id="GO:0005886">
    <property type="term" value="C:plasma membrane"/>
    <property type="evidence" value="ECO:0007669"/>
    <property type="project" value="UniProtKB-SubCell"/>
</dbReference>
<dbReference type="InterPro" id="IPR006702">
    <property type="entry name" value="CASP_dom"/>
</dbReference>
<dbReference type="InterPro" id="IPR045009">
    <property type="entry name" value="CASPL-5"/>
</dbReference>
<dbReference type="PANTHER" id="PTHR32021:SF1">
    <property type="entry name" value="CASP-LIKE PROTEIN 5A1"/>
    <property type="match status" value="1"/>
</dbReference>
<dbReference type="PANTHER" id="PTHR32021">
    <property type="entry name" value="CASP-LIKE PROTEIN 5B3"/>
    <property type="match status" value="1"/>
</dbReference>
<dbReference type="Pfam" id="PF04535">
    <property type="entry name" value="CASP_dom"/>
    <property type="match status" value="1"/>
</dbReference>
<keyword id="KW-1003">Cell membrane</keyword>
<keyword id="KW-0472">Membrane</keyword>
<keyword id="KW-0812">Transmembrane</keyword>
<keyword id="KW-1133">Transmembrane helix</keyword>
<sequence>MEVSHPAVHPVAVPPVLTEPPARVRMKDYQGMPGTLGGLALRLGQLGFAVLSFSIMVSTPDFSQVTAFCYLVAATVLQTLWSSITAVVDIYALSVRRSLHHSLLVGLFAVGDGVTSTLTFAAACATAGITVLIDNDLDECGQNHCGRFEAAAAMAFLSWIMAAPSFLLAFWSFGNKIVCF</sequence>
<reference key="1">
    <citation type="journal article" date="2011" name="BMC Genomics">
        <title>De novo characterization of the gametophyte transcriptome in bracken fern, Pteridium aquilinum.</title>
        <authorList>
            <person name="Der J.P."/>
            <person name="Barker M.S."/>
            <person name="Wickett N.J."/>
            <person name="dePamphilis C.W."/>
            <person name="Wolf P.G."/>
        </authorList>
    </citation>
    <scope>NUCLEOTIDE SEQUENCE [LARGE SCALE MRNA]</scope>
    <source>
        <strain>Wolf 83</strain>
        <tissue>Gametophyte</tissue>
    </source>
</reference>
<reference key="2">
    <citation type="journal article" date="2014" name="Plant Physiol.">
        <title>Functional and evolutionary analysis of the CASPARIAN STRIP MEMBRANE DOMAIN PROTEIN family.</title>
        <authorList>
            <person name="Roppolo D."/>
            <person name="Boeckmann B."/>
            <person name="Pfister A."/>
            <person name="Boutet E."/>
            <person name="Rubio M.C."/>
            <person name="Denervaud-Tendon V."/>
            <person name="Vermeer J.E."/>
            <person name="Gheyselinck J."/>
            <person name="Xenarios I."/>
            <person name="Geldner N."/>
        </authorList>
    </citation>
    <scope>GENE FAMILY</scope>
    <scope>NOMENCLATURE</scope>
</reference>
<accession>P0DI27</accession>
<proteinExistence type="inferred from homology"/>
<gene>
    <name type="ORF">PtaqContig9166</name>
</gene>